<proteinExistence type="evidence at transcript level"/>
<sequence>MNSGRRSLMSATASLSLLLCIFTTFVVVSNGELQRFIEPAKSDGSVSFIVIGDWGRRGSFNQSLVAYQMGKIGEKIDLDFVVSTGDNFYDNGLFSEHDPNFEQSFSNIYTAPSLQKQWYSVLGNHDYRGDAEAQLSSVLREIDSRWICLRSFVVDAELVEMFFVDTTPFVKEYYTEADGHSYDWRAVPSRNSYVKALLRDLEVSLKSSKARWKIVVGHHAMRSIGHHGDTKELNEELLPILKENGVDLYMNGHDHCLQHMSDEDSPIQFLTSGAGSKAWRGDINPVTINPKLLKFYYDGQGFMSARFTHSDAEIVFYDVFGEILHKWVTSKQLLHSSV</sequence>
<accession>Q9SCX8</accession>
<accession>Q8LFV2</accession>
<protein>
    <recommendedName>
        <fullName>Purple acid phosphatase 17</fullName>
        <ecNumber>3.1.3.2</ecNumber>
    </recommendedName>
    <alternativeName>
        <fullName>Acid phosphatase type 5</fullName>
    </alternativeName>
    <alternativeName>
        <fullName>Peroxidase</fullName>
        <ecNumber>1.11.1.7</ecNumber>
    </alternativeName>
</protein>
<name>PPA17_ARATH</name>
<keyword id="KW-0325">Glycoprotein</keyword>
<keyword id="KW-0378">Hydrolase</keyword>
<keyword id="KW-0408">Iron</keyword>
<keyword id="KW-0479">Metal-binding</keyword>
<keyword id="KW-0560">Oxidoreductase</keyword>
<keyword id="KW-1185">Reference proteome</keyword>
<keyword id="KW-0964">Secreted</keyword>
<keyword id="KW-0732">Signal</keyword>
<keyword id="KW-0862">Zinc</keyword>
<dbReference type="EC" id="3.1.3.2"/>
<dbReference type="EC" id="1.11.1.7"/>
<dbReference type="EMBL" id="AJ133747">
    <property type="protein sequence ID" value="CAC09923.1"/>
    <property type="molecule type" value="mRNA"/>
</dbReference>
<dbReference type="EMBL" id="AJ243527">
    <property type="protein sequence ID" value="CAB63938.1"/>
    <property type="molecule type" value="Genomic_DNA"/>
</dbReference>
<dbReference type="EMBL" id="AY818189">
    <property type="protein sequence ID" value="AAV69751.1"/>
    <property type="molecule type" value="mRNA"/>
</dbReference>
<dbReference type="EMBL" id="AB019230">
    <property type="protein sequence ID" value="BAB02702.1"/>
    <property type="molecule type" value="Genomic_DNA"/>
</dbReference>
<dbReference type="EMBL" id="CP002686">
    <property type="protein sequence ID" value="AEE76007.1"/>
    <property type="molecule type" value="Genomic_DNA"/>
</dbReference>
<dbReference type="EMBL" id="BT003135">
    <property type="protein sequence ID" value="AAO24567.1"/>
    <property type="molecule type" value="mRNA"/>
</dbReference>
<dbReference type="EMBL" id="AK228106">
    <property type="protein sequence ID" value="BAF00065.1"/>
    <property type="molecule type" value="mRNA"/>
</dbReference>
<dbReference type="EMBL" id="AY084629">
    <property type="protein sequence ID" value="AAM61192.1"/>
    <property type="molecule type" value="mRNA"/>
</dbReference>
<dbReference type="RefSeq" id="NP_566587.1">
    <property type="nucleotide sequence ID" value="NM_112660.6"/>
</dbReference>
<dbReference type="SMR" id="Q9SCX8"/>
<dbReference type="FunCoup" id="Q9SCX8">
    <property type="interactions" value="362"/>
</dbReference>
<dbReference type="STRING" id="3702.Q9SCX8"/>
<dbReference type="GlyCosmos" id="Q9SCX8">
    <property type="glycosylation" value="1 site, No reported glycans"/>
</dbReference>
<dbReference type="GlyGen" id="Q9SCX8">
    <property type="glycosylation" value="1 site"/>
</dbReference>
<dbReference type="PaxDb" id="3702-AT3G17790.1"/>
<dbReference type="ProteomicsDB" id="249017"/>
<dbReference type="EnsemblPlants" id="AT3G17790.1">
    <property type="protein sequence ID" value="AT3G17790.1"/>
    <property type="gene ID" value="AT3G17790"/>
</dbReference>
<dbReference type="GeneID" id="821047"/>
<dbReference type="Gramene" id="AT3G17790.1">
    <property type="protein sequence ID" value="AT3G17790.1"/>
    <property type="gene ID" value="AT3G17790"/>
</dbReference>
<dbReference type="KEGG" id="ath:AT3G17790"/>
<dbReference type="Araport" id="AT3G17790"/>
<dbReference type="TAIR" id="AT3G17790">
    <property type="gene designation" value="PAP17"/>
</dbReference>
<dbReference type="eggNOG" id="KOG2679">
    <property type="taxonomic scope" value="Eukaryota"/>
</dbReference>
<dbReference type="HOGENOM" id="CLU_043332_3_0_1"/>
<dbReference type="InParanoid" id="Q9SCX8"/>
<dbReference type="OMA" id="GFCIHEL"/>
<dbReference type="PhylomeDB" id="Q9SCX8"/>
<dbReference type="BioCyc" id="ARA:AT3G17790-MONOMER"/>
<dbReference type="PRO" id="PR:Q9SCX8"/>
<dbReference type="Proteomes" id="UP000006548">
    <property type="component" value="Chromosome 3"/>
</dbReference>
<dbReference type="ExpressionAtlas" id="Q9SCX8">
    <property type="expression patterns" value="baseline and differential"/>
</dbReference>
<dbReference type="GO" id="GO:0009986">
    <property type="term" value="C:cell surface"/>
    <property type="evidence" value="ECO:0000250"/>
    <property type="project" value="TAIR"/>
</dbReference>
<dbReference type="GO" id="GO:0005576">
    <property type="term" value="C:extracellular region"/>
    <property type="evidence" value="ECO:0007669"/>
    <property type="project" value="UniProtKB-SubCell"/>
</dbReference>
<dbReference type="GO" id="GO:0003993">
    <property type="term" value="F:acid phosphatase activity"/>
    <property type="evidence" value="ECO:0000250"/>
    <property type="project" value="TAIR"/>
</dbReference>
<dbReference type="GO" id="GO:0140825">
    <property type="term" value="F:lactoperoxidase activity"/>
    <property type="evidence" value="ECO:0007669"/>
    <property type="project" value="UniProtKB-EC"/>
</dbReference>
<dbReference type="GO" id="GO:0046872">
    <property type="term" value="F:metal ion binding"/>
    <property type="evidence" value="ECO:0007669"/>
    <property type="project" value="UniProtKB-KW"/>
</dbReference>
<dbReference type="GO" id="GO:0016791">
    <property type="term" value="F:phosphatase activity"/>
    <property type="evidence" value="ECO:0000314"/>
    <property type="project" value="TAIR"/>
</dbReference>
<dbReference type="GO" id="GO:0030643">
    <property type="term" value="P:intracellular phosphate ion homeostasis"/>
    <property type="evidence" value="ECO:0000270"/>
    <property type="project" value="TAIR"/>
</dbReference>
<dbReference type="GO" id="GO:0042542">
    <property type="term" value="P:response to hydrogen peroxide"/>
    <property type="evidence" value="ECO:0000270"/>
    <property type="project" value="TAIR"/>
</dbReference>
<dbReference type="CDD" id="cd07378">
    <property type="entry name" value="MPP_ACP5"/>
    <property type="match status" value="1"/>
</dbReference>
<dbReference type="FunFam" id="3.60.21.10:FF:000027">
    <property type="entry name" value="Purple acid phosphatase"/>
    <property type="match status" value="1"/>
</dbReference>
<dbReference type="Gene3D" id="3.60.21.10">
    <property type="match status" value="1"/>
</dbReference>
<dbReference type="InterPro" id="IPR024927">
    <property type="entry name" value="Acid_PPase"/>
</dbReference>
<dbReference type="InterPro" id="IPR004843">
    <property type="entry name" value="Calcineurin-like_PHP_ApaH"/>
</dbReference>
<dbReference type="InterPro" id="IPR029052">
    <property type="entry name" value="Metallo-depent_PP-like"/>
</dbReference>
<dbReference type="InterPro" id="IPR051558">
    <property type="entry name" value="Metallophosphoesterase_PAP"/>
</dbReference>
<dbReference type="PANTHER" id="PTHR10161">
    <property type="entry name" value="TARTRATE-RESISTANT ACID PHOSPHATASE TYPE 5"/>
    <property type="match status" value="1"/>
</dbReference>
<dbReference type="PANTHER" id="PTHR10161:SF14">
    <property type="entry name" value="TARTRATE-RESISTANT ACID PHOSPHATASE TYPE 5"/>
    <property type="match status" value="1"/>
</dbReference>
<dbReference type="Pfam" id="PF00149">
    <property type="entry name" value="Metallophos"/>
    <property type="match status" value="1"/>
</dbReference>
<dbReference type="PIRSF" id="PIRSF000898">
    <property type="entry name" value="Acid_Ptase_5"/>
    <property type="match status" value="1"/>
</dbReference>
<dbReference type="SUPFAM" id="SSF56300">
    <property type="entry name" value="Metallo-dependent phosphatases"/>
    <property type="match status" value="1"/>
</dbReference>
<evidence type="ECO:0000250" key="1"/>
<evidence type="ECO:0000255" key="2"/>
<evidence type="ECO:0000269" key="3">
    <source>
    </source>
</evidence>
<evidence type="ECO:0000269" key="4">
    <source>
    </source>
</evidence>
<evidence type="ECO:0000305" key="5"/>
<organism>
    <name type="scientific">Arabidopsis thaliana</name>
    <name type="common">Mouse-ear cress</name>
    <dbReference type="NCBI Taxonomy" id="3702"/>
    <lineage>
        <taxon>Eukaryota</taxon>
        <taxon>Viridiplantae</taxon>
        <taxon>Streptophyta</taxon>
        <taxon>Embryophyta</taxon>
        <taxon>Tracheophyta</taxon>
        <taxon>Spermatophyta</taxon>
        <taxon>Magnoliopsida</taxon>
        <taxon>eudicotyledons</taxon>
        <taxon>Gunneridae</taxon>
        <taxon>Pentapetalae</taxon>
        <taxon>rosids</taxon>
        <taxon>malvids</taxon>
        <taxon>Brassicales</taxon>
        <taxon>Brassicaceae</taxon>
        <taxon>Camelineae</taxon>
        <taxon>Arabidopsis</taxon>
    </lineage>
</organism>
<gene>
    <name type="primary">PAP17</name>
    <name type="synonym">ACP5</name>
    <name type="ordered locus">At3g17790</name>
    <name type="ORF">MEB5.10</name>
</gene>
<reference key="1">
    <citation type="journal article" date="1999" name="Plant J.">
        <title>A type 5 acid phosphatase gene from Arabidopsis thaliana is induced by phosphate starvation and by some other types of phosphate mobilising/oxidative stress conditions.</title>
        <authorList>
            <person name="del Pozo J.C."/>
            <person name="Allona I."/>
            <person name="Rubio V."/>
            <person name="Leyva A."/>
            <person name="de la Pena A."/>
            <person name="Aragoncillo C."/>
            <person name="Paz-Ares J."/>
        </authorList>
    </citation>
    <scope>NUCLEOTIDE SEQUENCE [GENOMIC DNA / MRNA]</scope>
    <scope>FUNCTION</scope>
    <scope>ACTIVITY REGULATION</scope>
    <scope>INDUCTION</scope>
    <source>
        <strain>cv. Landsberg erecta</strain>
    </source>
</reference>
<reference key="2">
    <citation type="journal article" date="2005" name="Plant Mol. Biol.">
        <title>Expression patterns of purple acid phosphatase genes in Arabidopsis organs and functional analysis of AtPAP23 predominantly transcribed in flower.</title>
        <authorList>
            <person name="Zhu H."/>
            <person name="Qian W."/>
            <person name="Lu X."/>
            <person name="Li D."/>
            <person name="Liu X."/>
            <person name="Liu K."/>
            <person name="Wang D."/>
        </authorList>
    </citation>
    <scope>NUCLEOTIDE SEQUENCE [MRNA]</scope>
    <scope>TISSUE SPECIFICITY</scope>
    <source>
        <strain>cv. Columbia</strain>
    </source>
</reference>
<reference key="3">
    <citation type="journal article" date="2000" name="DNA Res.">
        <title>Structural analysis of Arabidopsis thaliana chromosome 3. I. Sequence features of the regions of 4,504,864 bp covered by sixty P1 and TAC clones.</title>
        <authorList>
            <person name="Sato S."/>
            <person name="Nakamura Y."/>
            <person name="Kaneko T."/>
            <person name="Katoh T."/>
            <person name="Asamizu E."/>
            <person name="Tabata S."/>
        </authorList>
    </citation>
    <scope>NUCLEOTIDE SEQUENCE [LARGE SCALE GENOMIC DNA]</scope>
    <source>
        <strain>cv. Columbia</strain>
    </source>
</reference>
<reference key="4">
    <citation type="journal article" date="2017" name="Plant J.">
        <title>Araport11: a complete reannotation of the Arabidopsis thaliana reference genome.</title>
        <authorList>
            <person name="Cheng C.Y."/>
            <person name="Krishnakumar V."/>
            <person name="Chan A.P."/>
            <person name="Thibaud-Nissen F."/>
            <person name="Schobel S."/>
            <person name="Town C.D."/>
        </authorList>
    </citation>
    <scope>GENOME REANNOTATION</scope>
    <source>
        <strain>cv. Columbia</strain>
    </source>
</reference>
<reference key="5">
    <citation type="journal article" date="2003" name="Science">
        <title>Empirical analysis of transcriptional activity in the Arabidopsis genome.</title>
        <authorList>
            <person name="Yamada K."/>
            <person name="Lim J."/>
            <person name="Dale J.M."/>
            <person name="Chen H."/>
            <person name="Shinn P."/>
            <person name="Palm C.J."/>
            <person name="Southwick A.M."/>
            <person name="Wu H.C."/>
            <person name="Kim C.J."/>
            <person name="Nguyen M."/>
            <person name="Pham P.K."/>
            <person name="Cheuk R.F."/>
            <person name="Karlin-Newmann G."/>
            <person name="Liu S.X."/>
            <person name="Lam B."/>
            <person name="Sakano H."/>
            <person name="Wu T."/>
            <person name="Yu G."/>
            <person name="Miranda M."/>
            <person name="Quach H.L."/>
            <person name="Tripp M."/>
            <person name="Chang C.H."/>
            <person name="Lee J.M."/>
            <person name="Toriumi M.J."/>
            <person name="Chan M.M."/>
            <person name="Tang C.C."/>
            <person name="Onodera C.S."/>
            <person name="Deng J.M."/>
            <person name="Akiyama K."/>
            <person name="Ansari Y."/>
            <person name="Arakawa T."/>
            <person name="Banh J."/>
            <person name="Banno F."/>
            <person name="Bowser L."/>
            <person name="Brooks S.Y."/>
            <person name="Carninci P."/>
            <person name="Chao Q."/>
            <person name="Choy N."/>
            <person name="Enju A."/>
            <person name="Goldsmith A.D."/>
            <person name="Gurjal M."/>
            <person name="Hansen N.F."/>
            <person name="Hayashizaki Y."/>
            <person name="Johnson-Hopson C."/>
            <person name="Hsuan V.W."/>
            <person name="Iida K."/>
            <person name="Karnes M."/>
            <person name="Khan S."/>
            <person name="Koesema E."/>
            <person name="Ishida J."/>
            <person name="Jiang P.X."/>
            <person name="Jones T."/>
            <person name="Kawai J."/>
            <person name="Kamiya A."/>
            <person name="Meyers C."/>
            <person name="Nakajima M."/>
            <person name="Narusaka M."/>
            <person name="Seki M."/>
            <person name="Sakurai T."/>
            <person name="Satou M."/>
            <person name="Tamse R."/>
            <person name="Vaysberg M."/>
            <person name="Wallender E.K."/>
            <person name="Wong C."/>
            <person name="Yamamura Y."/>
            <person name="Yuan S."/>
            <person name="Shinozaki K."/>
            <person name="Davis R.W."/>
            <person name="Theologis A."/>
            <person name="Ecker J.R."/>
        </authorList>
    </citation>
    <scope>NUCLEOTIDE SEQUENCE [LARGE SCALE MRNA]</scope>
    <source>
        <strain>cv. Columbia</strain>
    </source>
</reference>
<reference key="6">
    <citation type="submission" date="2006-07" db="EMBL/GenBank/DDBJ databases">
        <title>Large-scale analysis of RIKEN Arabidopsis full-length (RAFL) cDNAs.</title>
        <authorList>
            <person name="Totoki Y."/>
            <person name="Seki M."/>
            <person name="Ishida J."/>
            <person name="Nakajima M."/>
            <person name="Enju A."/>
            <person name="Kamiya A."/>
            <person name="Narusaka M."/>
            <person name="Shin-i T."/>
            <person name="Nakagawa M."/>
            <person name="Sakamoto N."/>
            <person name="Oishi K."/>
            <person name="Kohara Y."/>
            <person name="Kobayashi M."/>
            <person name="Toyoda A."/>
            <person name="Sakaki Y."/>
            <person name="Sakurai T."/>
            <person name="Iida K."/>
            <person name="Akiyama K."/>
            <person name="Satou M."/>
            <person name="Toyoda T."/>
            <person name="Konagaya A."/>
            <person name="Carninci P."/>
            <person name="Kawai J."/>
            <person name="Hayashizaki Y."/>
            <person name="Shinozaki K."/>
        </authorList>
    </citation>
    <scope>NUCLEOTIDE SEQUENCE [LARGE SCALE MRNA]</scope>
    <source>
        <strain>cv. Columbia</strain>
    </source>
</reference>
<reference key="7">
    <citation type="submission" date="2002-03" db="EMBL/GenBank/DDBJ databases">
        <title>Full-length cDNA from Arabidopsis thaliana.</title>
        <authorList>
            <person name="Brover V.V."/>
            <person name="Troukhan M.E."/>
            <person name="Alexandrov N.A."/>
            <person name="Lu Y.-P."/>
            <person name="Flavell R.B."/>
            <person name="Feldmann K.A."/>
        </authorList>
    </citation>
    <scope>NUCLEOTIDE SEQUENCE [LARGE SCALE MRNA]</scope>
</reference>
<reference key="8">
    <citation type="journal article" date="2002" name="J. Biol. Chem.">
        <title>Purple acid phosphatases of Arabidopsis thaliana. Comparative analysis and differential regulation by phosphate deprivation.</title>
        <authorList>
            <person name="Li D."/>
            <person name="Zhu H."/>
            <person name="Liu K."/>
            <person name="Liu X."/>
            <person name="Leggewie G."/>
            <person name="Udvardi M."/>
            <person name="Wang D."/>
        </authorList>
    </citation>
    <scope>GENE FAMILY</scope>
    <scope>NOMENCLATURE</scope>
</reference>
<comment type="function">
    <text evidence="3">Metallo-phosphoesterase involved in phosphate metabolism. Has a peroxidase activity.</text>
</comment>
<comment type="catalytic activity">
    <reaction>
        <text>a phosphate monoester + H2O = an alcohol + phosphate</text>
        <dbReference type="Rhea" id="RHEA:15017"/>
        <dbReference type="ChEBI" id="CHEBI:15377"/>
        <dbReference type="ChEBI" id="CHEBI:30879"/>
        <dbReference type="ChEBI" id="CHEBI:43474"/>
        <dbReference type="ChEBI" id="CHEBI:67140"/>
        <dbReference type="EC" id="3.1.3.2"/>
    </reaction>
</comment>
<comment type="catalytic activity">
    <reaction>
        <text>2 a phenolic donor + H2O2 = 2 a phenolic radical donor + 2 H2O</text>
        <dbReference type="Rhea" id="RHEA:56136"/>
        <dbReference type="ChEBI" id="CHEBI:15377"/>
        <dbReference type="ChEBI" id="CHEBI:16240"/>
        <dbReference type="ChEBI" id="CHEBI:139520"/>
        <dbReference type="ChEBI" id="CHEBI:139521"/>
        <dbReference type="EC" id="1.11.1.7"/>
    </reaction>
</comment>
<comment type="cofactor">
    <cofactor evidence="1">
        <name>Fe cation</name>
        <dbReference type="ChEBI" id="CHEBI:24875"/>
    </cofactor>
    <text evidence="1">Binds 1 Fe cation per subunit.</text>
</comment>
<comment type="cofactor">
    <cofactor evidence="1">
        <name>Zn(2+)</name>
        <dbReference type="ChEBI" id="CHEBI:29105"/>
    </cofactor>
    <text evidence="1">Binds 1 zinc ion per subunit.</text>
</comment>
<comment type="activity regulation">
    <text evidence="3">Inhibited by phosphate and molybdate.</text>
</comment>
<comment type="subunit">
    <text evidence="1">Homodimer.</text>
</comment>
<comment type="subcellular location">
    <subcellularLocation>
        <location evidence="1">Secreted</location>
    </subcellularLocation>
</comment>
<comment type="tissue specificity">
    <text evidence="4">Expressed in roots, stems, leaves, flowers and siliques.</text>
</comment>
<comment type="induction">
    <text evidence="3">By phosphate starvation, during senescence, by ABA, by H(2)O(2), and by salt stress.</text>
</comment>
<comment type="similarity">
    <text evidence="5">Belongs to the metallophosphoesterase superfamily. Purple acid phosphatase family.</text>
</comment>
<feature type="signal peptide" evidence="2">
    <location>
        <begin position="1"/>
        <end position="31"/>
    </location>
</feature>
<feature type="chain" id="PRO_5000065319" description="Purple acid phosphatase 17">
    <location>
        <begin position="32"/>
        <end position="338"/>
    </location>
</feature>
<feature type="active site" description="Proton donor" evidence="1">
    <location>
        <position position="227"/>
    </location>
</feature>
<feature type="binding site" evidence="1">
    <location>
        <position position="53"/>
    </location>
    <ligand>
        <name>Fe cation</name>
        <dbReference type="ChEBI" id="CHEBI:24875"/>
    </ligand>
</feature>
<feature type="binding site" evidence="1">
    <location>
        <position position="86"/>
    </location>
    <ligand>
        <name>Fe cation</name>
        <dbReference type="ChEBI" id="CHEBI:24875"/>
    </ligand>
</feature>
<feature type="binding site" evidence="1">
    <location>
        <position position="86"/>
    </location>
    <ligand>
        <name>Zn(2+)</name>
        <dbReference type="ChEBI" id="CHEBI:29105"/>
    </ligand>
</feature>
<feature type="binding site" evidence="1">
    <location>
        <position position="89"/>
    </location>
    <ligand>
        <name>Fe cation</name>
        <dbReference type="ChEBI" id="CHEBI:24875"/>
    </ligand>
</feature>
<feature type="binding site" evidence="1">
    <location>
        <position position="124"/>
    </location>
    <ligand>
        <name>Zn(2+)</name>
        <dbReference type="ChEBI" id="CHEBI:29105"/>
    </ligand>
</feature>
<feature type="binding site" evidence="1">
    <location>
        <position position="218"/>
    </location>
    <ligand>
        <name>Zn(2+)</name>
        <dbReference type="ChEBI" id="CHEBI:29105"/>
    </ligand>
</feature>
<feature type="binding site" evidence="1">
    <location>
        <begin position="253"/>
        <end position="255"/>
    </location>
    <ligand>
        <name>substrate</name>
    </ligand>
</feature>
<feature type="binding site" evidence="1">
    <location>
        <position position="253"/>
    </location>
    <ligand>
        <name>Zn(2+)</name>
        <dbReference type="ChEBI" id="CHEBI:29105"/>
    </ligand>
</feature>
<feature type="binding site" evidence="1">
    <location>
        <position position="255"/>
    </location>
    <ligand>
        <name>Fe cation</name>
        <dbReference type="ChEBI" id="CHEBI:24875"/>
    </ligand>
</feature>
<feature type="glycosylation site" description="N-linked (GlcNAc...) asparagine" evidence="2">
    <location>
        <position position="61"/>
    </location>
</feature>
<feature type="sequence conflict" description="In Ref. 7; AAM61192." evidence="5" ref="7">
    <original>M</original>
    <variation>I</variation>
    <location>
        <position position="9"/>
    </location>
</feature>
<feature type="sequence conflict" description="In Ref. 7; AAM61192." evidence="5" ref="7">
    <original>Q</original>
    <variation>R</variation>
    <location>
        <position position="115"/>
    </location>
</feature>
<feature type="sequence conflict" description="In Ref. 7; AAM61192." evidence="5" ref="7">
    <original>G</original>
    <variation>S</variation>
    <location>
        <position position="245"/>
    </location>
</feature>